<feature type="chain" id="PRO_0000177330" description="Large ribosomal subunit protein bL35">
    <location>
        <begin position="1"/>
        <end position="63"/>
    </location>
</feature>
<feature type="region of interest" description="Disordered" evidence="2">
    <location>
        <begin position="1"/>
        <end position="45"/>
    </location>
</feature>
<feature type="compositionally biased region" description="Basic residues" evidence="2">
    <location>
        <begin position="1"/>
        <end position="43"/>
    </location>
</feature>
<name>RL35_BDEBA</name>
<comment type="similarity">
    <text evidence="1">Belongs to the bacterial ribosomal protein bL35 family.</text>
</comment>
<dbReference type="EMBL" id="BX842650">
    <property type="protein sequence ID" value="CAE79500.1"/>
    <property type="molecule type" value="Genomic_DNA"/>
</dbReference>
<dbReference type="RefSeq" id="WP_011164102.1">
    <property type="nucleotide sequence ID" value="NC_005363.1"/>
</dbReference>
<dbReference type="SMR" id="Q6MMK4"/>
<dbReference type="STRING" id="264462.Bd1624"/>
<dbReference type="GeneID" id="93012614"/>
<dbReference type="KEGG" id="bba:Bd1624"/>
<dbReference type="eggNOG" id="COG0291">
    <property type="taxonomic scope" value="Bacteria"/>
</dbReference>
<dbReference type="HOGENOM" id="CLU_169643_2_2_7"/>
<dbReference type="Proteomes" id="UP000008080">
    <property type="component" value="Chromosome"/>
</dbReference>
<dbReference type="GO" id="GO:1990904">
    <property type="term" value="C:ribonucleoprotein complex"/>
    <property type="evidence" value="ECO:0007669"/>
    <property type="project" value="UniProtKB-KW"/>
</dbReference>
<dbReference type="GO" id="GO:0005840">
    <property type="term" value="C:ribosome"/>
    <property type="evidence" value="ECO:0007669"/>
    <property type="project" value="UniProtKB-KW"/>
</dbReference>
<dbReference type="GO" id="GO:0003735">
    <property type="term" value="F:structural constituent of ribosome"/>
    <property type="evidence" value="ECO:0007669"/>
    <property type="project" value="InterPro"/>
</dbReference>
<dbReference type="GO" id="GO:0006412">
    <property type="term" value="P:translation"/>
    <property type="evidence" value="ECO:0007669"/>
    <property type="project" value="UniProtKB-UniRule"/>
</dbReference>
<dbReference type="FunFam" id="4.10.410.60:FF:000001">
    <property type="entry name" value="50S ribosomal protein L35"/>
    <property type="match status" value="1"/>
</dbReference>
<dbReference type="Gene3D" id="4.10.410.60">
    <property type="match status" value="1"/>
</dbReference>
<dbReference type="HAMAP" id="MF_00514">
    <property type="entry name" value="Ribosomal_bL35"/>
    <property type="match status" value="1"/>
</dbReference>
<dbReference type="InterPro" id="IPR001706">
    <property type="entry name" value="Ribosomal_bL35"/>
</dbReference>
<dbReference type="InterPro" id="IPR021137">
    <property type="entry name" value="Ribosomal_bL35-like"/>
</dbReference>
<dbReference type="InterPro" id="IPR037229">
    <property type="entry name" value="Ribosomal_bL35_sf"/>
</dbReference>
<dbReference type="NCBIfam" id="TIGR00001">
    <property type="entry name" value="rpmI_bact"/>
    <property type="match status" value="1"/>
</dbReference>
<dbReference type="Pfam" id="PF01632">
    <property type="entry name" value="Ribosomal_L35p"/>
    <property type="match status" value="1"/>
</dbReference>
<dbReference type="PRINTS" id="PR00064">
    <property type="entry name" value="RIBOSOMALL35"/>
</dbReference>
<dbReference type="SUPFAM" id="SSF143034">
    <property type="entry name" value="L35p-like"/>
    <property type="match status" value="1"/>
</dbReference>
<organism>
    <name type="scientific">Bdellovibrio bacteriovorus (strain ATCC 15356 / DSM 50701 / NCIMB 9529 / HD100)</name>
    <dbReference type="NCBI Taxonomy" id="264462"/>
    <lineage>
        <taxon>Bacteria</taxon>
        <taxon>Pseudomonadati</taxon>
        <taxon>Bdellovibrionota</taxon>
        <taxon>Bdellovibrionia</taxon>
        <taxon>Bdellovibrionales</taxon>
        <taxon>Pseudobdellovibrionaceae</taxon>
        <taxon>Bdellovibrio</taxon>
    </lineage>
</organism>
<protein>
    <recommendedName>
        <fullName evidence="1">Large ribosomal subunit protein bL35</fullName>
    </recommendedName>
    <alternativeName>
        <fullName evidence="3">50S ribosomal protein L35</fullName>
    </alternativeName>
</protein>
<evidence type="ECO:0000255" key="1">
    <source>
        <dbReference type="HAMAP-Rule" id="MF_00514"/>
    </source>
</evidence>
<evidence type="ECO:0000256" key="2">
    <source>
        <dbReference type="SAM" id="MobiDB-lite"/>
    </source>
</evidence>
<evidence type="ECO:0000305" key="3"/>
<proteinExistence type="inferred from homology"/>
<accession>Q6MMK4</accession>
<keyword id="KW-1185">Reference proteome</keyword>
<keyword id="KW-0687">Ribonucleoprotein</keyword>
<keyword id="KW-0689">Ribosomal protein</keyword>
<reference key="1">
    <citation type="journal article" date="2004" name="Science">
        <title>A predator unmasked: life cycle of Bdellovibrio bacteriovorus from a genomic perspective.</title>
        <authorList>
            <person name="Rendulic S."/>
            <person name="Jagtap P."/>
            <person name="Rosinus A."/>
            <person name="Eppinger M."/>
            <person name="Baar C."/>
            <person name="Lanz C."/>
            <person name="Keller H."/>
            <person name="Lambert C."/>
            <person name="Evans K.J."/>
            <person name="Goesmann A."/>
            <person name="Meyer F."/>
            <person name="Sockett R.E."/>
            <person name="Schuster S.C."/>
        </authorList>
    </citation>
    <scope>NUCLEOTIDE SEQUENCE [LARGE SCALE GENOMIC DNA]</scope>
    <source>
        <strain>ATCC 15356 / DSM 50701 / NCIMB 9529 / HD100</strain>
    </source>
</reference>
<gene>
    <name evidence="1" type="primary">rpmI</name>
    <name type="ordered locus">Bd1624</name>
</gene>
<sequence>MKMRTHSGAKKRLKVLSSGKVKKKSTRMRHLNSHMSSKTKRQLGKTSYVEDANMLQVRRCLVF</sequence>